<organism>
    <name type="scientific">Bordetella parapertussis (strain 12822 / ATCC BAA-587 / NCTC 13253)</name>
    <dbReference type="NCBI Taxonomy" id="257311"/>
    <lineage>
        <taxon>Bacteria</taxon>
        <taxon>Pseudomonadati</taxon>
        <taxon>Pseudomonadota</taxon>
        <taxon>Betaproteobacteria</taxon>
        <taxon>Burkholderiales</taxon>
        <taxon>Alcaligenaceae</taxon>
        <taxon>Bordetella</taxon>
    </lineage>
</organism>
<gene>
    <name evidence="1" type="primary">azoR</name>
    <name type="ordered locus">BPP3780</name>
</gene>
<name>AZOR_BORPA</name>
<evidence type="ECO:0000255" key="1">
    <source>
        <dbReference type="HAMAP-Rule" id="MF_01216"/>
    </source>
</evidence>
<comment type="function">
    <text evidence="1">Quinone reductase that provides resistance to thiol-specific stress caused by electrophilic quinones.</text>
</comment>
<comment type="function">
    <text evidence="1">Also exhibits azoreductase activity. Catalyzes the reductive cleavage of the azo bond in aromatic azo compounds to the corresponding amines.</text>
</comment>
<comment type="catalytic activity">
    <reaction evidence="1">
        <text>2 a quinone + NADH + H(+) = 2 a 1,4-benzosemiquinone + NAD(+)</text>
        <dbReference type="Rhea" id="RHEA:65952"/>
        <dbReference type="ChEBI" id="CHEBI:15378"/>
        <dbReference type="ChEBI" id="CHEBI:57540"/>
        <dbReference type="ChEBI" id="CHEBI:57945"/>
        <dbReference type="ChEBI" id="CHEBI:132124"/>
        <dbReference type="ChEBI" id="CHEBI:134225"/>
    </reaction>
</comment>
<comment type="catalytic activity">
    <reaction evidence="1">
        <text>N,N-dimethyl-1,4-phenylenediamine + anthranilate + 2 NAD(+) = 2-(4-dimethylaminophenyl)diazenylbenzoate + 2 NADH + 2 H(+)</text>
        <dbReference type="Rhea" id="RHEA:55872"/>
        <dbReference type="ChEBI" id="CHEBI:15378"/>
        <dbReference type="ChEBI" id="CHEBI:15783"/>
        <dbReference type="ChEBI" id="CHEBI:16567"/>
        <dbReference type="ChEBI" id="CHEBI:57540"/>
        <dbReference type="ChEBI" id="CHEBI:57945"/>
        <dbReference type="ChEBI" id="CHEBI:71579"/>
        <dbReference type="EC" id="1.7.1.17"/>
    </reaction>
</comment>
<comment type="cofactor">
    <cofactor evidence="1">
        <name>FMN</name>
        <dbReference type="ChEBI" id="CHEBI:58210"/>
    </cofactor>
    <text evidence="1">Binds 1 FMN per subunit.</text>
</comment>
<comment type="subunit">
    <text evidence="1">Homodimer.</text>
</comment>
<comment type="similarity">
    <text evidence="1">Belongs to the azoreductase type 1 family.</text>
</comment>
<dbReference type="EC" id="1.6.5.-" evidence="1"/>
<dbReference type="EC" id="1.7.1.17" evidence="1"/>
<dbReference type="EMBL" id="BX640434">
    <property type="protein sequence ID" value="CAE39063.1"/>
    <property type="molecule type" value="Genomic_DNA"/>
</dbReference>
<dbReference type="RefSeq" id="WP_010929241.1">
    <property type="nucleotide sequence ID" value="NC_002928.3"/>
</dbReference>
<dbReference type="SMR" id="Q7W488"/>
<dbReference type="GeneID" id="93205576"/>
<dbReference type="KEGG" id="bpa:BPP3780"/>
<dbReference type="HOGENOM" id="CLU_088964_0_0_4"/>
<dbReference type="Proteomes" id="UP000001421">
    <property type="component" value="Chromosome"/>
</dbReference>
<dbReference type="GO" id="GO:0009055">
    <property type="term" value="F:electron transfer activity"/>
    <property type="evidence" value="ECO:0007669"/>
    <property type="project" value="UniProtKB-UniRule"/>
</dbReference>
<dbReference type="GO" id="GO:0010181">
    <property type="term" value="F:FMN binding"/>
    <property type="evidence" value="ECO:0007669"/>
    <property type="project" value="UniProtKB-UniRule"/>
</dbReference>
<dbReference type="GO" id="GO:0016652">
    <property type="term" value="F:oxidoreductase activity, acting on NAD(P)H as acceptor"/>
    <property type="evidence" value="ECO:0007669"/>
    <property type="project" value="UniProtKB-UniRule"/>
</dbReference>
<dbReference type="GO" id="GO:0016655">
    <property type="term" value="F:oxidoreductase activity, acting on NAD(P)H, quinone or similar compound as acceptor"/>
    <property type="evidence" value="ECO:0007669"/>
    <property type="project" value="InterPro"/>
</dbReference>
<dbReference type="Gene3D" id="3.40.50.360">
    <property type="match status" value="1"/>
</dbReference>
<dbReference type="HAMAP" id="MF_01216">
    <property type="entry name" value="Azoreductase_type1"/>
    <property type="match status" value="1"/>
</dbReference>
<dbReference type="InterPro" id="IPR003680">
    <property type="entry name" value="Flavodoxin_fold"/>
</dbReference>
<dbReference type="InterPro" id="IPR029039">
    <property type="entry name" value="Flavoprotein-like_sf"/>
</dbReference>
<dbReference type="InterPro" id="IPR050104">
    <property type="entry name" value="FMN-dep_NADH:Q_OxRdtase_AzoR1"/>
</dbReference>
<dbReference type="InterPro" id="IPR023048">
    <property type="entry name" value="NADH:quinone_OxRdtase_FMN_depd"/>
</dbReference>
<dbReference type="PANTHER" id="PTHR43741">
    <property type="entry name" value="FMN-DEPENDENT NADH-AZOREDUCTASE 1"/>
    <property type="match status" value="1"/>
</dbReference>
<dbReference type="PANTHER" id="PTHR43741:SF2">
    <property type="entry name" value="FMN-DEPENDENT NADH:QUINONE OXIDOREDUCTASE"/>
    <property type="match status" value="1"/>
</dbReference>
<dbReference type="Pfam" id="PF02525">
    <property type="entry name" value="Flavodoxin_2"/>
    <property type="match status" value="1"/>
</dbReference>
<dbReference type="SUPFAM" id="SSF52218">
    <property type="entry name" value="Flavoproteins"/>
    <property type="match status" value="1"/>
</dbReference>
<sequence length="209" mass="22427">MKTLVILSSILGDRSNSKQLADHLLARLKQSEPGGTVKIRDLAADPVPYFDGATVGALFTPAEARNAEQQRIAALSDDLVAELFDADRIVFAVPVYNFNLPAQFKSYIDHIARAGVTFRYTAEGKPEGLVQGKQVLMLIARGGKSEGTPDDTMTPYLKQMLAFLGMTDVTFIAAEGMAMGELAAQEGLALARQRIDALSLDARQGLAAA</sequence>
<protein>
    <recommendedName>
        <fullName evidence="1">FMN-dependent NADH:quinone oxidoreductase</fullName>
        <ecNumber evidence="1">1.6.5.-</ecNumber>
    </recommendedName>
    <alternativeName>
        <fullName evidence="1">Azo-dye reductase</fullName>
    </alternativeName>
    <alternativeName>
        <fullName evidence="1">FMN-dependent NADH-azo compound oxidoreductase</fullName>
    </alternativeName>
    <alternativeName>
        <fullName evidence="1">FMN-dependent NADH-azoreductase</fullName>
        <ecNumber evidence="1">1.7.1.17</ecNumber>
    </alternativeName>
</protein>
<reference key="1">
    <citation type="journal article" date="2003" name="Nat. Genet.">
        <title>Comparative analysis of the genome sequences of Bordetella pertussis, Bordetella parapertussis and Bordetella bronchiseptica.</title>
        <authorList>
            <person name="Parkhill J."/>
            <person name="Sebaihia M."/>
            <person name="Preston A."/>
            <person name="Murphy L.D."/>
            <person name="Thomson N.R."/>
            <person name="Harris D.E."/>
            <person name="Holden M.T.G."/>
            <person name="Churcher C.M."/>
            <person name="Bentley S.D."/>
            <person name="Mungall K.L."/>
            <person name="Cerdeno-Tarraga A.-M."/>
            <person name="Temple L."/>
            <person name="James K.D."/>
            <person name="Harris B."/>
            <person name="Quail M.A."/>
            <person name="Achtman M."/>
            <person name="Atkin R."/>
            <person name="Baker S."/>
            <person name="Basham D."/>
            <person name="Bason N."/>
            <person name="Cherevach I."/>
            <person name="Chillingworth T."/>
            <person name="Collins M."/>
            <person name="Cronin A."/>
            <person name="Davis P."/>
            <person name="Doggett J."/>
            <person name="Feltwell T."/>
            <person name="Goble A."/>
            <person name="Hamlin N."/>
            <person name="Hauser H."/>
            <person name="Holroyd S."/>
            <person name="Jagels K."/>
            <person name="Leather S."/>
            <person name="Moule S."/>
            <person name="Norberczak H."/>
            <person name="O'Neil S."/>
            <person name="Ormond D."/>
            <person name="Price C."/>
            <person name="Rabbinowitsch E."/>
            <person name="Rutter S."/>
            <person name="Sanders M."/>
            <person name="Saunders D."/>
            <person name="Seeger K."/>
            <person name="Sharp S."/>
            <person name="Simmonds M."/>
            <person name="Skelton J."/>
            <person name="Squares R."/>
            <person name="Squares S."/>
            <person name="Stevens K."/>
            <person name="Unwin L."/>
            <person name="Whitehead S."/>
            <person name="Barrell B.G."/>
            <person name="Maskell D.J."/>
        </authorList>
    </citation>
    <scope>NUCLEOTIDE SEQUENCE [LARGE SCALE GENOMIC DNA]</scope>
    <source>
        <strain>12822 / ATCC BAA-587 / NCTC 13253</strain>
    </source>
</reference>
<proteinExistence type="inferred from homology"/>
<accession>Q7W488</accession>
<keyword id="KW-0285">Flavoprotein</keyword>
<keyword id="KW-0288">FMN</keyword>
<keyword id="KW-0520">NAD</keyword>
<keyword id="KW-0560">Oxidoreductase</keyword>
<feature type="chain" id="PRO_0000245896" description="FMN-dependent NADH:quinone oxidoreductase">
    <location>
        <begin position="1"/>
        <end position="209"/>
    </location>
</feature>
<feature type="binding site" evidence="1">
    <location>
        <position position="9"/>
    </location>
    <ligand>
        <name>FMN</name>
        <dbReference type="ChEBI" id="CHEBI:58210"/>
    </ligand>
</feature>
<feature type="binding site" evidence="1">
    <location>
        <begin position="15"/>
        <end position="17"/>
    </location>
    <ligand>
        <name>FMN</name>
        <dbReference type="ChEBI" id="CHEBI:58210"/>
    </ligand>
</feature>